<reference key="1">
    <citation type="journal article" date="1998" name="Nature">
        <title>Deciphering the biology of Mycobacterium tuberculosis from the complete genome sequence.</title>
        <authorList>
            <person name="Cole S.T."/>
            <person name="Brosch R."/>
            <person name="Parkhill J."/>
            <person name="Garnier T."/>
            <person name="Churcher C.M."/>
            <person name="Harris D.E."/>
            <person name="Gordon S.V."/>
            <person name="Eiglmeier K."/>
            <person name="Gas S."/>
            <person name="Barry C.E. III"/>
            <person name="Tekaia F."/>
            <person name="Badcock K."/>
            <person name="Basham D."/>
            <person name="Brown D."/>
            <person name="Chillingworth T."/>
            <person name="Connor R."/>
            <person name="Davies R.M."/>
            <person name="Devlin K."/>
            <person name="Feltwell T."/>
            <person name="Gentles S."/>
            <person name="Hamlin N."/>
            <person name="Holroyd S."/>
            <person name="Hornsby T."/>
            <person name="Jagels K."/>
            <person name="Krogh A."/>
            <person name="McLean J."/>
            <person name="Moule S."/>
            <person name="Murphy L.D."/>
            <person name="Oliver S."/>
            <person name="Osborne J."/>
            <person name="Quail M.A."/>
            <person name="Rajandream M.A."/>
            <person name="Rogers J."/>
            <person name="Rutter S."/>
            <person name="Seeger K."/>
            <person name="Skelton S."/>
            <person name="Squares S."/>
            <person name="Squares R."/>
            <person name="Sulston J.E."/>
            <person name="Taylor K."/>
            <person name="Whitehead S."/>
            <person name="Barrell B.G."/>
        </authorList>
    </citation>
    <scope>NUCLEOTIDE SEQUENCE [LARGE SCALE GENOMIC DNA]</scope>
    <source>
        <strain>ATCC 25618 / H37Rv</strain>
    </source>
</reference>
<reference key="2">
    <citation type="journal article" date="2011" name="Mol. Cell. Proteomics">
        <title>Proteogenomic analysis of Mycobacterium tuberculosis by high resolution mass spectrometry.</title>
        <authorList>
            <person name="Kelkar D.S."/>
            <person name="Kumar D."/>
            <person name="Kumar P."/>
            <person name="Balakrishnan L."/>
            <person name="Muthusamy B."/>
            <person name="Yadav A.K."/>
            <person name="Shrivastava P."/>
            <person name="Marimuthu A."/>
            <person name="Anand S."/>
            <person name="Sundaram H."/>
            <person name="Kingsbury R."/>
            <person name="Harsha H.C."/>
            <person name="Nair B."/>
            <person name="Prasad T.S."/>
            <person name="Chauhan D.S."/>
            <person name="Katoch K."/>
            <person name="Katoch V.M."/>
            <person name="Kumar P."/>
            <person name="Chaerkady R."/>
            <person name="Ramachandran S."/>
            <person name="Dash D."/>
            <person name="Pandey A."/>
        </authorList>
    </citation>
    <scope>IDENTIFICATION BY MASS SPECTROMETRY [LARGE SCALE ANALYSIS]</scope>
</reference>
<reference evidence="6" key="3">
    <citation type="submission" date="2015-06" db="PDB data bank">
        <title>Rv3722c aminotransferase from Mycobacterium tuberculosis.</title>
        <authorList>
            <consortium name="Structures of Mtb proteins conferring susceptibility to known Mtb inhibitors (MTBI)"/>
            <person name="Osipiuk J."/>
            <person name="Hatzos-Skintges C."/>
            <person name="Jedrzejczak R."/>
            <person name="Babnigg G."/>
            <person name="Sacchettini J."/>
            <person name="Joachimiak A."/>
        </authorList>
    </citation>
    <scope>X-RAY CRYSTALLOGRAPHY (1.83 ANGSTROMS) OF 3-430 IN COMPLEX WITH PYRIDOXAL PHOSPHATE</scope>
</reference>
<reference key="4">
    <citation type="journal article" date="2020" name="Nat. Commun.">
        <title>Aspartate aminotransferase Rv3722c governs aspartate-dependent nitrogen metabolism in Mycobacterium tuberculosis.</title>
        <authorList>
            <person name="Jansen R.S."/>
            <person name="Mandyoli L."/>
            <person name="Hughes R."/>
            <person name="Wakabayashi S."/>
            <person name="Pinkham J.T."/>
            <person name="Selbach B."/>
            <person name="Guinn K.M."/>
            <person name="Rubin E.J."/>
            <person name="Sacchettini J.C."/>
            <person name="Rhee K.Y."/>
        </authorList>
    </citation>
    <scope>X-RAY CRYSTALLOGRAPHY (2.22 ANGSTROMS) IN COMPLEXES WITH PYRIDOXAL PHOSPHATE; GLUTAMIC ACID AND KYNURENINE</scope>
    <scope>FUNCTION</scope>
    <scope>CATALYTIC ACTIVITY</scope>
    <scope>COFACTOR</scope>
    <scope>BIOPHYSICOCHEMICAL PROPERTIES</scope>
    <scope>DISRUPTION PHENOTYPE</scope>
    <source>
        <strain>H37Rv</strain>
    </source>
</reference>
<sequence>MSFDSLSPQELAALHARHQQDYAALQGMKLALDLTRGKPSAEQLDLSNQLLSLPGDDYRDPEGTDTRNYGGQHGLPGLRAIFAELLGIAVPNLIAGNNSSLELMHDIVAFSMLYGGVDSPRPWIQEQDGIKFLCPVPGYDRHFAITETMGIEMIPIPMLQDGPDVDLIEELVAVDPAIKGMWTVPVFGNPSGVTYSWETVRRLVQMRTAAPDFRLFWDNAYAVHTLTLDFPRQVDVLGLAAKAGNPNRPYVFASTSKITFAGGGVSFFGGSLGNIAWYLQYAGKKSIGPDKVNQLRHLRFFGDADGVRLHMLRHQQILAPKFALVAEVLDQRLSESKIASWTEPKGGYFISLDVLPGTARRTVALAKDVGIAVTEAGASFPYRKDPDDKNIRIAPSFPSVPDLRNAVDGLATCALLAATETLLNQGLASSAPNVR</sequence>
<keyword id="KW-0002">3D-structure</keyword>
<keyword id="KW-0032">Aminotransferase</keyword>
<keyword id="KW-0663">Pyridoxal phosphate</keyword>
<keyword id="KW-1185">Reference proteome</keyword>
<keyword id="KW-0808">Transferase</keyword>
<feature type="chain" id="PRO_0000450667" description="Aspartate aminotransferase">
    <location>
        <begin position="1"/>
        <end position="435"/>
    </location>
</feature>
<feature type="binding site" evidence="1 2">
    <location>
        <position position="69"/>
    </location>
    <ligand>
        <name>pyridoxal 5'-phosphate</name>
        <dbReference type="ChEBI" id="CHEBI:597326"/>
    </ligand>
</feature>
<feature type="binding site" evidence="1 2">
    <location>
        <begin position="100"/>
        <end position="101"/>
    </location>
    <ligand>
        <name>pyridoxal 5'-phosphate</name>
        <dbReference type="ChEBI" id="CHEBI:597326"/>
    </ligand>
</feature>
<feature type="binding site" evidence="1">
    <location>
        <begin position="139"/>
        <end position="141"/>
    </location>
    <ligand>
        <name>substrate</name>
    </ligand>
</feature>
<feature type="binding site" evidence="1 2">
    <location>
        <position position="189"/>
    </location>
    <ligand>
        <name>pyridoxal 5'-phosphate</name>
        <dbReference type="ChEBI" id="CHEBI:597326"/>
    </ligand>
</feature>
<feature type="binding site" evidence="1 2">
    <location>
        <position position="221"/>
    </location>
    <ligand>
        <name>pyridoxal 5'-phosphate</name>
        <dbReference type="ChEBI" id="CHEBI:597326"/>
    </ligand>
</feature>
<feature type="binding site" evidence="1 2">
    <location>
        <begin position="254"/>
        <end position="256"/>
    </location>
    <ligand>
        <name>pyridoxal 5'-phosphate</name>
        <dbReference type="ChEBI" id="CHEBI:597326"/>
    </ligand>
</feature>
<feature type="binding site" evidence="1">
    <location>
        <position position="392"/>
    </location>
    <ligand>
        <name>substrate</name>
    </ligand>
</feature>
<feature type="helix" evidence="7">
    <location>
        <begin position="8"/>
        <end position="27"/>
    </location>
</feature>
<feature type="strand" evidence="8">
    <location>
        <begin position="32"/>
        <end position="34"/>
    </location>
</feature>
<feature type="helix" evidence="7">
    <location>
        <begin position="41"/>
        <end position="45"/>
    </location>
</feature>
<feature type="helix" evidence="7">
    <location>
        <begin position="46"/>
        <end position="52"/>
    </location>
</feature>
<feature type="helix" evidence="7">
    <location>
        <begin position="76"/>
        <end position="86"/>
    </location>
</feature>
<feature type="helix" evidence="7">
    <location>
        <begin position="90"/>
        <end position="92"/>
    </location>
</feature>
<feature type="strand" evidence="7">
    <location>
        <begin position="93"/>
        <end position="95"/>
    </location>
</feature>
<feature type="helix" evidence="7">
    <location>
        <begin position="100"/>
        <end position="114"/>
    </location>
</feature>
<feature type="helix" evidence="7">
    <location>
        <begin position="123"/>
        <end position="125"/>
    </location>
</feature>
<feature type="strand" evidence="7">
    <location>
        <begin position="131"/>
        <end position="137"/>
    </location>
</feature>
<feature type="helix" evidence="7">
    <location>
        <begin position="140"/>
        <end position="148"/>
    </location>
</feature>
<feature type="strand" evidence="7">
    <location>
        <begin position="152"/>
        <end position="159"/>
    </location>
</feature>
<feature type="strand" evidence="8">
    <location>
        <begin position="160"/>
        <end position="163"/>
    </location>
</feature>
<feature type="helix" evidence="7">
    <location>
        <begin position="165"/>
        <end position="174"/>
    </location>
</feature>
<feature type="strand" evidence="7">
    <location>
        <begin position="178"/>
        <end position="183"/>
    </location>
</feature>
<feature type="turn" evidence="7">
    <location>
        <begin position="189"/>
        <end position="191"/>
    </location>
</feature>
<feature type="helix" evidence="7">
    <location>
        <begin position="197"/>
        <end position="205"/>
    </location>
</feature>
<feature type="strand" evidence="7">
    <location>
        <begin position="214"/>
        <end position="218"/>
    </location>
</feature>
<feature type="turn" evidence="7">
    <location>
        <begin position="220"/>
        <end position="223"/>
    </location>
</feature>
<feature type="strand" evidence="7">
    <location>
        <begin position="225"/>
        <end position="229"/>
    </location>
</feature>
<feature type="helix" evidence="7">
    <location>
        <begin position="236"/>
        <end position="242"/>
    </location>
</feature>
<feature type="strand" evidence="7">
    <location>
        <begin position="248"/>
        <end position="255"/>
    </location>
</feature>
<feature type="turn" evidence="7">
    <location>
        <begin position="256"/>
        <end position="258"/>
    </location>
</feature>
<feature type="strand" evidence="7">
    <location>
        <begin position="266"/>
        <end position="269"/>
    </location>
</feature>
<feature type="helix" evidence="7">
    <location>
        <begin position="272"/>
        <end position="285"/>
    </location>
</feature>
<feature type="helix" evidence="7">
    <location>
        <begin position="291"/>
        <end position="301"/>
    </location>
</feature>
<feature type="helix" evidence="7">
    <location>
        <begin position="304"/>
        <end position="333"/>
    </location>
</feature>
<feature type="turn" evidence="7">
    <location>
        <begin position="334"/>
        <end position="337"/>
    </location>
</feature>
<feature type="strand" evidence="7">
    <location>
        <begin position="345"/>
        <end position="348"/>
    </location>
</feature>
<feature type="strand" evidence="7">
    <location>
        <begin position="350"/>
        <end position="353"/>
    </location>
</feature>
<feature type="helix" evidence="7">
    <location>
        <begin position="359"/>
        <end position="367"/>
    </location>
</feature>
<feature type="turn" evidence="7">
    <location>
        <begin position="368"/>
        <end position="370"/>
    </location>
</feature>
<feature type="turn" evidence="7">
    <location>
        <begin position="376"/>
        <end position="379"/>
    </location>
</feature>
<feature type="helix" evidence="7">
    <location>
        <begin position="381"/>
        <end position="383"/>
    </location>
</feature>
<feature type="strand" evidence="7">
    <location>
        <begin position="390"/>
        <end position="393"/>
    </location>
</feature>
<feature type="strand" evidence="7">
    <location>
        <begin position="396"/>
        <end position="398"/>
    </location>
</feature>
<feature type="helix" evidence="7">
    <location>
        <begin position="400"/>
        <end position="424"/>
    </location>
</feature>
<feature type="turn" evidence="7">
    <location>
        <begin position="425"/>
        <end position="427"/>
    </location>
</feature>
<protein>
    <recommendedName>
        <fullName evidence="3">Aspartate aminotransferase</fullName>
        <shortName evidence="3">AspAT</shortName>
        <ecNumber evidence="1">2.6.1.1</ecNumber>
    </recommendedName>
</protein>
<dbReference type="EC" id="2.6.1.1" evidence="1"/>
<dbReference type="EMBL" id="AL123456">
    <property type="protein sequence ID" value="CCP46548.1"/>
    <property type="molecule type" value="Genomic_DNA"/>
</dbReference>
<dbReference type="RefSeq" id="NP_218239.2">
    <property type="nucleotide sequence ID" value="NC_000962.3"/>
</dbReference>
<dbReference type="RefSeq" id="WP_003899653.1">
    <property type="nucleotide sequence ID" value="NZ_NVQJ01000009.1"/>
</dbReference>
<dbReference type="PDB" id="5C6U">
    <property type="method" value="X-ray"/>
    <property type="resolution" value="1.83 A"/>
    <property type="chains" value="A=3-430"/>
</dbReference>
<dbReference type="PDB" id="6U78">
    <property type="method" value="X-ray"/>
    <property type="resolution" value="2.60 A"/>
    <property type="chains" value="A/B/C/D=1-435"/>
</dbReference>
<dbReference type="PDB" id="6U7A">
    <property type="method" value="X-ray"/>
    <property type="resolution" value="2.22 A"/>
    <property type="chains" value="A/B/C/D/E/F/G/H=1-435"/>
</dbReference>
<dbReference type="PDBsum" id="5C6U"/>
<dbReference type="PDBsum" id="6U78"/>
<dbReference type="PDBsum" id="6U7A"/>
<dbReference type="SMR" id="O69689"/>
<dbReference type="IntAct" id="O69689">
    <property type="interactions" value="12"/>
</dbReference>
<dbReference type="MINT" id="O69689"/>
<dbReference type="STRING" id="83332.Rv3722c"/>
<dbReference type="PaxDb" id="83332-Rv3722c"/>
<dbReference type="DNASU" id="885321"/>
<dbReference type="GeneID" id="885321"/>
<dbReference type="KEGG" id="mtu:Rv3722c"/>
<dbReference type="KEGG" id="mtv:RVBD_3722c"/>
<dbReference type="PATRIC" id="fig|83332.111.peg.4138"/>
<dbReference type="TubercuList" id="Rv3722c"/>
<dbReference type="eggNOG" id="COG1167">
    <property type="taxonomic scope" value="Bacteria"/>
</dbReference>
<dbReference type="InParanoid" id="O69689"/>
<dbReference type="OrthoDB" id="9802328at2"/>
<dbReference type="PhylomeDB" id="O69689"/>
<dbReference type="BRENDA" id="2.6.1.1">
    <property type="organism ID" value="3445"/>
</dbReference>
<dbReference type="EvolutionaryTrace" id="O69689"/>
<dbReference type="Proteomes" id="UP000001584">
    <property type="component" value="Chromosome"/>
</dbReference>
<dbReference type="GO" id="GO:0005576">
    <property type="term" value="C:extracellular region"/>
    <property type="evidence" value="ECO:0007005"/>
    <property type="project" value="MTBBASE"/>
</dbReference>
<dbReference type="GO" id="GO:0004069">
    <property type="term" value="F:L-aspartate:2-oxoglutarate aminotransferase activity"/>
    <property type="evidence" value="ECO:0007669"/>
    <property type="project" value="UniProtKB-EC"/>
</dbReference>
<dbReference type="FunFam" id="3.40.640.10:FF:000109">
    <property type="entry name" value="Aminotransferase"/>
    <property type="match status" value="1"/>
</dbReference>
<dbReference type="Gene3D" id="3.90.1150.10">
    <property type="entry name" value="Aspartate Aminotransferase, domain 1"/>
    <property type="match status" value="1"/>
</dbReference>
<dbReference type="Gene3D" id="3.40.640.10">
    <property type="entry name" value="Type I PLP-dependent aspartate aminotransferase-like (Major domain)"/>
    <property type="match status" value="1"/>
</dbReference>
<dbReference type="InterPro" id="IPR024551">
    <property type="entry name" value="AspAT_Ic"/>
</dbReference>
<dbReference type="InterPro" id="IPR015424">
    <property type="entry name" value="PyrdxlP-dep_Trfase"/>
</dbReference>
<dbReference type="InterPro" id="IPR015421">
    <property type="entry name" value="PyrdxlP-dep_Trfase_major"/>
</dbReference>
<dbReference type="InterPro" id="IPR015422">
    <property type="entry name" value="PyrdxlP-dep_Trfase_small"/>
</dbReference>
<dbReference type="PANTHER" id="PTHR43799">
    <property type="entry name" value="AMINOTRANSFERASE, PUTATIVE-RELATED"/>
    <property type="match status" value="1"/>
</dbReference>
<dbReference type="PANTHER" id="PTHR43799:SF1">
    <property type="entry name" value="ASPARTATE AMINOTRANSFERASE"/>
    <property type="match status" value="1"/>
</dbReference>
<dbReference type="Pfam" id="PF12897">
    <property type="entry name" value="Asp_aminotransf"/>
    <property type="match status" value="1"/>
</dbReference>
<dbReference type="SUPFAM" id="SSF53383">
    <property type="entry name" value="PLP-dependent transferases"/>
    <property type="match status" value="1"/>
</dbReference>
<organism>
    <name type="scientific">Mycobacterium tuberculosis (strain ATCC 25618 / H37Rv)</name>
    <dbReference type="NCBI Taxonomy" id="83332"/>
    <lineage>
        <taxon>Bacteria</taxon>
        <taxon>Bacillati</taxon>
        <taxon>Actinomycetota</taxon>
        <taxon>Actinomycetes</taxon>
        <taxon>Mycobacteriales</taxon>
        <taxon>Mycobacteriaceae</taxon>
        <taxon>Mycobacterium</taxon>
        <taxon>Mycobacterium tuberculosis complex</taxon>
    </lineage>
</organism>
<accession>O69689</accession>
<accession>F2GFU4</accession>
<accession>I6Y4D4</accession>
<accession>Q7D501</accession>
<proteinExistence type="evidence at protein level"/>
<name>ASPAT_MYCTU</name>
<evidence type="ECO:0000269" key="1">
    <source>
    </source>
</evidence>
<evidence type="ECO:0000269" key="2">
    <source ref="3"/>
</evidence>
<evidence type="ECO:0000303" key="3">
    <source>
    </source>
</evidence>
<evidence type="ECO:0000305" key="4"/>
<evidence type="ECO:0000312" key="5">
    <source>
        <dbReference type="EMBL" id="CCP46548.1"/>
    </source>
</evidence>
<evidence type="ECO:0007744" key="6">
    <source>
        <dbReference type="PDB" id="5C6U"/>
    </source>
</evidence>
<evidence type="ECO:0007829" key="7">
    <source>
        <dbReference type="PDB" id="5C6U"/>
    </source>
</evidence>
<evidence type="ECO:0007829" key="8">
    <source>
        <dbReference type="PDB" id="6U78"/>
    </source>
</evidence>
<gene>
    <name evidence="5" type="ordered locus">Rv3722c</name>
</gene>
<comment type="function">
    <text evidence="1">Main aspartate aminotransferase that couples nitrogen assimilation to aspartate synthesis. Has a weak, but significant, side activity toward kynurenine (Kyn). Oxaloacetate and 2-oxoglutarate, but not pyruvate, serve as amino acceptors, while Asp, Glu and Kyn serve as the best amino donors. Essential for axenic growth and survival of M.tuberculosis in macrophages and in mice.</text>
</comment>
<comment type="catalytic activity">
    <reaction evidence="1">
        <text>L-aspartate + 2-oxoglutarate = oxaloacetate + L-glutamate</text>
        <dbReference type="Rhea" id="RHEA:21824"/>
        <dbReference type="ChEBI" id="CHEBI:16452"/>
        <dbReference type="ChEBI" id="CHEBI:16810"/>
        <dbReference type="ChEBI" id="CHEBI:29985"/>
        <dbReference type="ChEBI" id="CHEBI:29991"/>
        <dbReference type="EC" id="2.6.1.1"/>
    </reaction>
</comment>
<comment type="cofactor">
    <cofactor evidence="1">
        <name>pyridoxal 5'-phosphate</name>
        <dbReference type="ChEBI" id="CHEBI:597326"/>
    </cofactor>
</comment>
<comment type="biophysicochemical properties">
    <kinetics>
        <KM evidence="1">2.34 mM for aspartate</KM>
        <KM evidence="1">29.4 mM for kynurenine</KM>
        <text evidence="1">kcat is 136 sec(-1) with aspartate as substrate. kcat is 198 sec(-1) with kynurenine as substrate.</text>
    </kinetics>
</comment>
<comment type="disruption phenotype">
    <text evidence="1">Deletion of the gene leads to virulence attenuation in macrophages and mice.</text>
</comment>
<comment type="similarity">
    <text evidence="4">Belongs to the class-I pyridoxal-phosphate-dependent aminotransferase family.</text>
</comment>